<organism>
    <name type="scientific">Escherichia coli O8 (strain IAI1)</name>
    <dbReference type="NCBI Taxonomy" id="585034"/>
    <lineage>
        <taxon>Bacteria</taxon>
        <taxon>Pseudomonadati</taxon>
        <taxon>Pseudomonadota</taxon>
        <taxon>Gammaproteobacteria</taxon>
        <taxon>Enterobacterales</taxon>
        <taxon>Enterobacteriaceae</taxon>
        <taxon>Escherichia</taxon>
    </lineage>
</organism>
<gene>
    <name evidence="1" type="primary">metG</name>
    <name type="ordered locus">ECIAI1_2189</name>
</gene>
<accession>B7M4V9</accession>
<sequence>MTQVAKKILVTCALPYANGSIHLGHMLEHIQADVWVRYQRMRGHEVNFICADDAHGTPIMLKAQQLGITPEQMIGEMSQEHQTDFAGFNISYDNYHSTHSEENRQLSELIYSRLKENGFIKNRTISQLYDPEKGMFLPDRFVKGTCPKCKSPDQYGDNCEVCGATYSPTELIEPKSVVSGATPVMRDSEHFFFDLPSFSEMLQAWTRSGALQEQVANKMQEWFESGLQQWDISRDAPYFGFEIPNAPGKYFYVWLDAPIGYMGSFKNLCDKRGDSVSFDEYWKKDSTAELYHFIGKDIVYFHSLFWPAMLEGSNFRKPTNLFVHGYVTVNGAKMSKSRGTFIKASTWLNHFDADSLRYYYTAKLSSRIDDIDLNLEDFVQRVNADIVNKVVNLASRNAGFINKRFDGVLASELADPQLYKTFTDAAEVIGEAWESREFGKAVREIMALADLANRYVDEQAPWVVAKQEGRDADLQAICSMGINLFRVLMTYLKPVLPKLTERAEAFLNTELTWDGIQQPLLGHKVNPFKALYNRIDMKQVEALVEASKEEVKAAAAPVTGPLADDPIQETITFDDFAKVDLRVALIENAEFVEGSDKLLRLTLDLGGEKRNVFSGIRSAYPDPQALIGRHTIMVANLAPRKMRFGISEGMVMAAGPGGKDIFLLSPDAGAKPGHQVK</sequence>
<keyword id="KW-0030">Aminoacyl-tRNA synthetase</keyword>
<keyword id="KW-0067">ATP-binding</keyword>
<keyword id="KW-0963">Cytoplasm</keyword>
<keyword id="KW-0436">Ligase</keyword>
<keyword id="KW-0479">Metal-binding</keyword>
<keyword id="KW-0547">Nucleotide-binding</keyword>
<keyword id="KW-0648">Protein biosynthesis</keyword>
<keyword id="KW-0694">RNA-binding</keyword>
<keyword id="KW-0820">tRNA-binding</keyword>
<keyword id="KW-0862">Zinc</keyword>
<comment type="function">
    <text evidence="1">Is required not only for elongation of protein synthesis but also for the initiation of all mRNA translation through initiator tRNA(fMet) aminoacylation.</text>
</comment>
<comment type="catalytic activity">
    <reaction evidence="1">
        <text>tRNA(Met) + L-methionine + ATP = L-methionyl-tRNA(Met) + AMP + diphosphate</text>
        <dbReference type="Rhea" id="RHEA:13481"/>
        <dbReference type="Rhea" id="RHEA-COMP:9667"/>
        <dbReference type="Rhea" id="RHEA-COMP:9698"/>
        <dbReference type="ChEBI" id="CHEBI:30616"/>
        <dbReference type="ChEBI" id="CHEBI:33019"/>
        <dbReference type="ChEBI" id="CHEBI:57844"/>
        <dbReference type="ChEBI" id="CHEBI:78442"/>
        <dbReference type="ChEBI" id="CHEBI:78530"/>
        <dbReference type="ChEBI" id="CHEBI:456215"/>
        <dbReference type="EC" id="6.1.1.10"/>
    </reaction>
</comment>
<comment type="cofactor">
    <cofactor evidence="1">
        <name>Zn(2+)</name>
        <dbReference type="ChEBI" id="CHEBI:29105"/>
    </cofactor>
    <text evidence="1">Binds 1 zinc ion per subunit.</text>
</comment>
<comment type="subunit">
    <text evidence="1">Homodimer.</text>
</comment>
<comment type="subcellular location">
    <subcellularLocation>
        <location evidence="1">Cytoplasm</location>
    </subcellularLocation>
</comment>
<comment type="similarity">
    <text evidence="1">Belongs to the class-I aminoacyl-tRNA synthetase family. MetG type 1 subfamily.</text>
</comment>
<feature type="chain" id="PRO_1000199289" description="Methionine--tRNA ligase">
    <location>
        <begin position="1"/>
        <end position="677"/>
    </location>
</feature>
<feature type="domain" description="tRNA-binding" evidence="1">
    <location>
        <begin position="575"/>
        <end position="677"/>
    </location>
</feature>
<feature type="short sequence motif" description="'HIGH' region">
    <location>
        <begin position="15"/>
        <end position="25"/>
    </location>
</feature>
<feature type="short sequence motif" description="'KMSKS' region">
    <location>
        <begin position="333"/>
        <end position="337"/>
    </location>
</feature>
<feature type="binding site" evidence="1">
    <location>
        <position position="146"/>
    </location>
    <ligand>
        <name>Zn(2+)</name>
        <dbReference type="ChEBI" id="CHEBI:29105"/>
    </ligand>
</feature>
<feature type="binding site" evidence="1">
    <location>
        <position position="149"/>
    </location>
    <ligand>
        <name>Zn(2+)</name>
        <dbReference type="ChEBI" id="CHEBI:29105"/>
    </ligand>
</feature>
<feature type="binding site" evidence="1">
    <location>
        <position position="159"/>
    </location>
    <ligand>
        <name>Zn(2+)</name>
        <dbReference type="ChEBI" id="CHEBI:29105"/>
    </ligand>
</feature>
<feature type="binding site" evidence="1">
    <location>
        <position position="162"/>
    </location>
    <ligand>
        <name>Zn(2+)</name>
        <dbReference type="ChEBI" id="CHEBI:29105"/>
    </ligand>
</feature>
<feature type="binding site" evidence="1">
    <location>
        <position position="336"/>
    </location>
    <ligand>
        <name>ATP</name>
        <dbReference type="ChEBI" id="CHEBI:30616"/>
    </ligand>
</feature>
<proteinExistence type="inferred from homology"/>
<protein>
    <recommendedName>
        <fullName evidence="1">Methionine--tRNA ligase</fullName>
        <ecNumber evidence="1">6.1.1.10</ecNumber>
    </recommendedName>
    <alternativeName>
        <fullName evidence="1">Methionyl-tRNA synthetase</fullName>
        <shortName evidence="1">MetRS</shortName>
    </alternativeName>
</protein>
<name>SYM_ECO8A</name>
<evidence type="ECO:0000255" key="1">
    <source>
        <dbReference type="HAMAP-Rule" id="MF_00098"/>
    </source>
</evidence>
<dbReference type="EC" id="6.1.1.10" evidence="1"/>
<dbReference type="EMBL" id="CU928160">
    <property type="protein sequence ID" value="CAQ99034.1"/>
    <property type="molecule type" value="Genomic_DNA"/>
</dbReference>
<dbReference type="RefSeq" id="WP_001295427.1">
    <property type="nucleotide sequence ID" value="NC_011741.1"/>
</dbReference>
<dbReference type="SMR" id="B7M4V9"/>
<dbReference type="GeneID" id="75206361"/>
<dbReference type="KEGG" id="ecr:ECIAI1_2189"/>
<dbReference type="HOGENOM" id="CLU_009710_7_0_6"/>
<dbReference type="GO" id="GO:0005829">
    <property type="term" value="C:cytosol"/>
    <property type="evidence" value="ECO:0007669"/>
    <property type="project" value="TreeGrafter"/>
</dbReference>
<dbReference type="GO" id="GO:0005524">
    <property type="term" value="F:ATP binding"/>
    <property type="evidence" value="ECO:0007669"/>
    <property type="project" value="UniProtKB-UniRule"/>
</dbReference>
<dbReference type="GO" id="GO:0046872">
    <property type="term" value="F:metal ion binding"/>
    <property type="evidence" value="ECO:0007669"/>
    <property type="project" value="UniProtKB-KW"/>
</dbReference>
<dbReference type="GO" id="GO:0004825">
    <property type="term" value="F:methionine-tRNA ligase activity"/>
    <property type="evidence" value="ECO:0007669"/>
    <property type="project" value="UniProtKB-UniRule"/>
</dbReference>
<dbReference type="GO" id="GO:0000049">
    <property type="term" value="F:tRNA binding"/>
    <property type="evidence" value="ECO:0007669"/>
    <property type="project" value="UniProtKB-KW"/>
</dbReference>
<dbReference type="GO" id="GO:0006431">
    <property type="term" value="P:methionyl-tRNA aminoacylation"/>
    <property type="evidence" value="ECO:0007669"/>
    <property type="project" value="UniProtKB-UniRule"/>
</dbReference>
<dbReference type="CDD" id="cd07957">
    <property type="entry name" value="Anticodon_Ia_Met"/>
    <property type="match status" value="1"/>
</dbReference>
<dbReference type="CDD" id="cd00814">
    <property type="entry name" value="MetRS_core"/>
    <property type="match status" value="1"/>
</dbReference>
<dbReference type="CDD" id="cd02800">
    <property type="entry name" value="tRNA_bind_EcMetRS_like"/>
    <property type="match status" value="1"/>
</dbReference>
<dbReference type="FunFam" id="1.10.730.10:FF:000005">
    <property type="entry name" value="Methionine--tRNA ligase"/>
    <property type="match status" value="1"/>
</dbReference>
<dbReference type="FunFam" id="2.20.28.20:FF:000001">
    <property type="entry name" value="Methionine--tRNA ligase"/>
    <property type="match status" value="1"/>
</dbReference>
<dbReference type="FunFam" id="2.40.50.140:FF:000042">
    <property type="entry name" value="Methionine--tRNA ligase"/>
    <property type="match status" value="1"/>
</dbReference>
<dbReference type="Gene3D" id="3.40.50.620">
    <property type="entry name" value="HUPs"/>
    <property type="match status" value="1"/>
</dbReference>
<dbReference type="Gene3D" id="1.10.730.10">
    <property type="entry name" value="Isoleucyl-tRNA Synthetase, Domain 1"/>
    <property type="match status" value="1"/>
</dbReference>
<dbReference type="Gene3D" id="2.20.28.20">
    <property type="entry name" value="Methionyl-tRNA synthetase, Zn-domain"/>
    <property type="match status" value="1"/>
</dbReference>
<dbReference type="Gene3D" id="2.40.50.140">
    <property type="entry name" value="Nucleic acid-binding proteins"/>
    <property type="match status" value="1"/>
</dbReference>
<dbReference type="HAMAP" id="MF_00098">
    <property type="entry name" value="Met_tRNA_synth_type1"/>
    <property type="match status" value="1"/>
</dbReference>
<dbReference type="InterPro" id="IPR001412">
    <property type="entry name" value="aa-tRNA-synth_I_CS"/>
</dbReference>
<dbReference type="InterPro" id="IPR041872">
    <property type="entry name" value="Anticodon_Met"/>
</dbReference>
<dbReference type="InterPro" id="IPR004495">
    <property type="entry name" value="Met-tRNA-synth_bsu_C"/>
</dbReference>
<dbReference type="InterPro" id="IPR023458">
    <property type="entry name" value="Met-tRNA_ligase_1"/>
</dbReference>
<dbReference type="InterPro" id="IPR014758">
    <property type="entry name" value="Met-tRNA_synth"/>
</dbReference>
<dbReference type="InterPro" id="IPR015413">
    <property type="entry name" value="Methionyl/Leucyl_tRNA_Synth"/>
</dbReference>
<dbReference type="InterPro" id="IPR033911">
    <property type="entry name" value="MetRS_core"/>
</dbReference>
<dbReference type="InterPro" id="IPR029038">
    <property type="entry name" value="MetRS_Zn"/>
</dbReference>
<dbReference type="InterPro" id="IPR012340">
    <property type="entry name" value="NA-bd_OB-fold"/>
</dbReference>
<dbReference type="InterPro" id="IPR014729">
    <property type="entry name" value="Rossmann-like_a/b/a_fold"/>
</dbReference>
<dbReference type="InterPro" id="IPR002547">
    <property type="entry name" value="tRNA-bd_dom"/>
</dbReference>
<dbReference type="InterPro" id="IPR009080">
    <property type="entry name" value="tRNAsynth_Ia_anticodon-bd"/>
</dbReference>
<dbReference type="NCBIfam" id="TIGR00398">
    <property type="entry name" value="metG"/>
    <property type="match status" value="1"/>
</dbReference>
<dbReference type="NCBIfam" id="TIGR00399">
    <property type="entry name" value="metG_C_term"/>
    <property type="match status" value="1"/>
</dbReference>
<dbReference type="NCBIfam" id="NF001100">
    <property type="entry name" value="PRK00133.1"/>
    <property type="match status" value="1"/>
</dbReference>
<dbReference type="PANTHER" id="PTHR45765">
    <property type="entry name" value="METHIONINE--TRNA LIGASE"/>
    <property type="match status" value="1"/>
</dbReference>
<dbReference type="PANTHER" id="PTHR45765:SF1">
    <property type="entry name" value="METHIONINE--TRNA LIGASE, CYTOPLASMIC"/>
    <property type="match status" value="1"/>
</dbReference>
<dbReference type="Pfam" id="PF19303">
    <property type="entry name" value="Anticodon_3"/>
    <property type="match status" value="1"/>
</dbReference>
<dbReference type="Pfam" id="PF09334">
    <property type="entry name" value="tRNA-synt_1g"/>
    <property type="match status" value="1"/>
</dbReference>
<dbReference type="Pfam" id="PF01588">
    <property type="entry name" value="tRNA_bind"/>
    <property type="match status" value="1"/>
</dbReference>
<dbReference type="PRINTS" id="PR01041">
    <property type="entry name" value="TRNASYNTHMET"/>
</dbReference>
<dbReference type="SUPFAM" id="SSF47323">
    <property type="entry name" value="Anticodon-binding domain of a subclass of class I aminoacyl-tRNA synthetases"/>
    <property type="match status" value="1"/>
</dbReference>
<dbReference type="SUPFAM" id="SSF57770">
    <property type="entry name" value="Methionyl-tRNA synthetase (MetRS), Zn-domain"/>
    <property type="match status" value="1"/>
</dbReference>
<dbReference type="SUPFAM" id="SSF50249">
    <property type="entry name" value="Nucleic acid-binding proteins"/>
    <property type="match status" value="1"/>
</dbReference>
<dbReference type="SUPFAM" id="SSF52374">
    <property type="entry name" value="Nucleotidylyl transferase"/>
    <property type="match status" value="1"/>
</dbReference>
<dbReference type="PROSITE" id="PS00178">
    <property type="entry name" value="AA_TRNA_LIGASE_I"/>
    <property type="match status" value="1"/>
</dbReference>
<dbReference type="PROSITE" id="PS50886">
    <property type="entry name" value="TRBD"/>
    <property type="match status" value="1"/>
</dbReference>
<reference key="1">
    <citation type="journal article" date="2009" name="PLoS Genet.">
        <title>Organised genome dynamics in the Escherichia coli species results in highly diverse adaptive paths.</title>
        <authorList>
            <person name="Touchon M."/>
            <person name="Hoede C."/>
            <person name="Tenaillon O."/>
            <person name="Barbe V."/>
            <person name="Baeriswyl S."/>
            <person name="Bidet P."/>
            <person name="Bingen E."/>
            <person name="Bonacorsi S."/>
            <person name="Bouchier C."/>
            <person name="Bouvet O."/>
            <person name="Calteau A."/>
            <person name="Chiapello H."/>
            <person name="Clermont O."/>
            <person name="Cruveiller S."/>
            <person name="Danchin A."/>
            <person name="Diard M."/>
            <person name="Dossat C."/>
            <person name="Karoui M.E."/>
            <person name="Frapy E."/>
            <person name="Garry L."/>
            <person name="Ghigo J.M."/>
            <person name="Gilles A.M."/>
            <person name="Johnson J."/>
            <person name="Le Bouguenec C."/>
            <person name="Lescat M."/>
            <person name="Mangenot S."/>
            <person name="Martinez-Jehanne V."/>
            <person name="Matic I."/>
            <person name="Nassif X."/>
            <person name="Oztas S."/>
            <person name="Petit M.A."/>
            <person name="Pichon C."/>
            <person name="Rouy Z."/>
            <person name="Ruf C.S."/>
            <person name="Schneider D."/>
            <person name="Tourret J."/>
            <person name="Vacherie B."/>
            <person name="Vallenet D."/>
            <person name="Medigue C."/>
            <person name="Rocha E.P.C."/>
            <person name="Denamur E."/>
        </authorList>
    </citation>
    <scope>NUCLEOTIDE SEQUENCE [LARGE SCALE GENOMIC DNA]</scope>
    <source>
        <strain>IAI1</strain>
    </source>
</reference>